<reference key="1">
    <citation type="journal article" date="1997" name="DNA Res.">
        <title>Structural analysis of Arabidopsis thaliana chromosome 5. III. Sequence features of the regions of 1,191,918 bp covered by seventeen physically assigned P1 clones.</title>
        <authorList>
            <person name="Nakamura Y."/>
            <person name="Sato S."/>
            <person name="Kaneko T."/>
            <person name="Kotani H."/>
            <person name="Asamizu E."/>
            <person name="Miyajima N."/>
            <person name="Tabata S."/>
        </authorList>
    </citation>
    <scope>NUCLEOTIDE SEQUENCE [LARGE SCALE GENOMIC DNA]</scope>
    <source>
        <strain>cv. Columbia</strain>
    </source>
</reference>
<reference key="2">
    <citation type="journal article" date="2017" name="Plant J.">
        <title>Araport11: a complete reannotation of the Arabidopsis thaliana reference genome.</title>
        <authorList>
            <person name="Cheng C.Y."/>
            <person name="Krishnakumar V."/>
            <person name="Chan A.P."/>
            <person name="Thibaud-Nissen F."/>
            <person name="Schobel S."/>
            <person name="Town C.D."/>
        </authorList>
    </citation>
    <scope>GENOME REANNOTATION</scope>
    <source>
        <strain>cv. Columbia</strain>
    </source>
</reference>
<reference key="3">
    <citation type="journal article" date="2003" name="Science">
        <title>Empirical analysis of transcriptional activity in the Arabidopsis genome.</title>
        <authorList>
            <person name="Yamada K."/>
            <person name="Lim J."/>
            <person name="Dale J.M."/>
            <person name="Chen H."/>
            <person name="Shinn P."/>
            <person name="Palm C.J."/>
            <person name="Southwick A.M."/>
            <person name="Wu H.C."/>
            <person name="Kim C.J."/>
            <person name="Nguyen M."/>
            <person name="Pham P.K."/>
            <person name="Cheuk R.F."/>
            <person name="Karlin-Newmann G."/>
            <person name="Liu S.X."/>
            <person name="Lam B."/>
            <person name="Sakano H."/>
            <person name="Wu T."/>
            <person name="Yu G."/>
            <person name="Miranda M."/>
            <person name="Quach H.L."/>
            <person name="Tripp M."/>
            <person name="Chang C.H."/>
            <person name="Lee J.M."/>
            <person name="Toriumi M.J."/>
            <person name="Chan M.M."/>
            <person name="Tang C.C."/>
            <person name="Onodera C.S."/>
            <person name="Deng J.M."/>
            <person name="Akiyama K."/>
            <person name="Ansari Y."/>
            <person name="Arakawa T."/>
            <person name="Banh J."/>
            <person name="Banno F."/>
            <person name="Bowser L."/>
            <person name="Brooks S.Y."/>
            <person name="Carninci P."/>
            <person name="Chao Q."/>
            <person name="Choy N."/>
            <person name="Enju A."/>
            <person name="Goldsmith A.D."/>
            <person name="Gurjal M."/>
            <person name="Hansen N.F."/>
            <person name="Hayashizaki Y."/>
            <person name="Johnson-Hopson C."/>
            <person name="Hsuan V.W."/>
            <person name="Iida K."/>
            <person name="Karnes M."/>
            <person name="Khan S."/>
            <person name="Koesema E."/>
            <person name="Ishida J."/>
            <person name="Jiang P.X."/>
            <person name="Jones T."/>
            <person name="Kawai J."/>
            <person name="Kamiya A."/>
            <person name="Meyers C."/>
            <person name="Nakajima M."/>
            <person name="Narusaka M."/>
            <person name="Seki M."/>
            <person name="Sakurai T."/>
            <person name="Satou M."/>
            <person name="Tamse R."/>
            <person name="Vaysberg M."/>
            <person name="Wallender E.K."/>
            <person name="Wong C."/>
            <person name="Yamamura Y."/>
            <person name="Yuan S."/>
            <person name="Shinozaki K."/>
            <person name="Davis R.W."/>
            <person name="Theologis A."/>
            <person name="Ecker J.R."/>
        </authorList>
    </citation>
    <scope>NUCLEOTIDE SEQUENCE [LARGE SCALE MRNA]</scope>
    <source>
        <strain>cv. Columbia</strain>
    </source>
</reference>
<reference key="4">
    <citation type="journal article" date="2012" name="Plant Cell">
        <title>Systems and trans-system level analysis identifies conserved iron deficiency responses in the plant lineage.</title>
        <authorList>
            <person name="Urzica E.I."/>
            <person name="Casero D."/>
            <person name="Yamasaki H."/>
            <person name="Hsieh S.I."/>
            <person name="Adler L.N."/>
            <person name="Karpowicz S.J."/>
            <person name="Blaby-Haas C.E."/>
            <person name="Clarke S.G."/>
            <person name="Loo J.A."/>
            <person name="Pellegrini M."/>
            <person name="Merchant S.S."/>
        </authorList>
    </citation>
    <scope>FUNCTION</scope>
    <scope>DISRUPTION PHENOTYPE</scope>
    <scope>TISSUE SPECIFICITY</scope>
    <scope>INDUCTION BY IRON DEFICIENCY</scope>
    <source>
        <strain>cv. Col-4</strain>
    </source>
</reference>
<reference key="5">
    <citation type="journal article" date="2013" name="Front. Plant Sci.">
        <title>The transcriptional response of Arabidopsis leaves to Fe deficiency.</title>
        <authorList>
            <person name="Rodriguez-Celma J."/>
            <person name="Pan I.C."/>
            <person name="Li W."/>
            <person name="Lan P."/>
            <person name="Buckhout T.J."/>
            <person name="Schmidt W."/>
        </authorList>
    </citation>
    <scope>INDUCTION BY IRON DEFICIENCY</scope>
</reference>
<accession>Q9FN15</accession>
<proteinExistence type="evidence at transcript level"/>
<evidence type="ECO:0000255" key="1"/>
<evidence type="ECO:0000256" key="2">
    <source>
        <dbReference type="SAM" id="MobiDB-lite"/>
    </source>
</evidence>
<evidence type="ECO:0000269" key="3">
    <source>
    </source>
</evidence>
<evidence type="ECO:0000269" key="4">
    <source>
    </source>
</evidence>
<evidence type="ECO:0000303" key="5">
    <source>
    </source>
</evidence>
<evidence type="ECO:0000312" key="6">
    <source>
        <dbReference type="Araport" id="AT5G67370"/>
    </source>
</evidence>
<evidence type="ECO:0000312" key="7">
    <source>
        <dbReference type="EMBL" id="BAB09022.1"/>
    </source>
</evidence>
<protein>
    <recommendedName>
        <fullName evidence="5">Protein CONSERVED IN THE GREEN LINEAGE AND DIATOMS 27, chloroplastic</fullName>
    </recommendedName>
</protein>
<organism>
    <name type="scientific">Arabidopsis thaliana</name>
    <name type="common">Mouse-ear cress</name>
    <dbReference type="NCBI Taxonomy" id="3702"/>
    <lineage>
        <taxon>Eukaryota</taxon>
        <taxon>Viridiplantae</taxon>
        <taxon>Streptophyta</taxon>
        <taxon>Embryophyta</taxon>
        <taxon>Tracheophyta</taxon>
        <taxon>Spermatophyta</taxon>
        <taxon>Magnoliopsida</taxon>
        <taxon>eudicotyledons</taxon>
        <taxon>Gunneridae</taxon>
        <taxon>Pentapetalae</taxon>
        <taxon>rosids</taxon>
        <taxon>malvids</taxon>
        <taxon>Brassicales</taxon>
        <taxon>Brassicaceae</taxon>
        <taxon>Camelineae</taxon>
        <taxon>Arabidopsis</taxon>
    </lineage>
</organism>
<keyword id="KW-0150">Chloroplast</keyword>
<keyword id="KW-0472">Membrane</keyword>
<keyword id="KW-0934">Plastid</keyword>
<keyword id="KW-1185">Reference proteome</keyword>
<keyword id="KW-0809">Transit peptide</keyword>
<keyword id="KW-0812">Transmembrane</keyword>
<keyword id="KW-1133">Transmembrane helix</keyword>
<comment type="function">
    <text evidence="3">Required for growth in low iron conditions.</text>
</comment>
<comment type="subcellular location">
    <subcellularLocation>
        <location evidence="1">Membrane</location>
        <topology evidence="1">Multi-pass membrane protein</topology>
    </subcellularLocation>
    <subcellularLocation>
        <location evidence="1">Plastid</location>
        <location evidence="1">Chloroplast</location>
    </subcellularLocation>
</comment>
<comment type="tissue specificity">
    <text evidence="3">Mostly expressed in seeds, leaves and flowers, and, to a lower extent, in roots.</text>
</comment>
<comment type="induction">
    <text evidence="3 4">Accumulates progressively upon iron deficiency.</text>
</comment>
<comment type="disruption phenotype">
    <text evidence="3">Stronger growth defect in iron-deficient conditions.</text>
</comment>
<name>GLD27_ARATH</name>
<feature type="transit peptide" description="Chloroplast" evidence="1">
    <location>
        <begin position="1"/>
        <end position="59"/>
    </location>
</feature>
<feature type="chain" id="PRO_0000442037" description="Protein CONSERVED IN THE GREEN LINEAGE AND DIATOMS 27, chloroplastic" evidence="1">
    <location>
        <begin position="60"/>
        <end position="327"/>
    </location>
</feature>
<feature type="transmembrane region" description="Helical" evidence="1">
    <location>
        <begin position="119"/>
        <end position="139"/>
    </location>
</feature>
<feature type="transmembrane region" description="Helical" evidence="1">
    <location>
        <begin position="148"/>
        <end position="168"/>
    </location>
</feature>
<feature type="transmembrane region" description="Helical" evidence="1">
    <location>
        <begin position="225"/>
        <end position="245"/>
    </location>
</feature>
<feature type="region of interest" description="Disordered" evidence="2">
    <location>
        <begin position="66"/>
        <end position="88"/>
    </location>
</feature>
<gene>
    <name evidence="5" type="primary">CGLD27</name>
    <name evidence="6" type="ordered locus">At5g67370</name>
    <name evidence="7" type="ORF">K8K14.9</name>
</gene>
<dbReference type="EMBL" id="AB007645">
    <property type="protein sequence ID" value="BAB09022.1"/>
    <property type="molecule type" value="Genomic_DNA"/>
</dbReference>
<dbReference type="EMBL" id="CP002688">
    <property type="protein sequence ID" value="AED98333.1"/>
    <property type="molecule type" value="Genomic_DNA"/>
</dbReference>
<dbReference type="EMBL" id="AF360127">
    <property type="protein sequence ID" value="AAK25837.1"/>
    <property type="molecule type" value="mRNA"/>
</dbReference>
<dbReference type="EMBL" id="AY051028">
    <property type="protein sequence ID" value="AAK93705.1"/>
    <property type="molecule type" value="mRNA"/>
</dbReference>
<dbReference type="RefSeq" id="NP_201538.1">
    <property type="nucleotide sequence ID" value="NM_126137.4"/>
</dbReference>
<dbReference type="FunCoup" id="Q9FN15">
    <property type="interactions" value="472"/>
</dbReference>
<dbReference type="STRING" id="3702.Q9FN15"/>
<dbReference type="PaxDb" id="3702-AT5G67370.1"/>
<dbReference type="ProteomicsDB" id="247254"/>
<dbReference type="EnsemblPlants" id="AT5G67370.1">
    <property type="protein sequence ID" value="AT5G67370.1"/>
    <property type="gene ID" value="AT5G67370"/>
</dbReference>
<dbReference type="GeneID" id="836872"/>
<dbReference type="Gramene" id="AT5G67370.1">
    <property type="protein sequence ID" value="AT5G67370.1"/>
    <property type="gene ID" value="AT5G67370"/>
</dbReference>
<dbReference type="KEGG" id="ath:AT5G67370"/>
<dbReference type="Araport" id="AT5G67370"/>
<dbReference type="TAIR" id="AT5G67370">
    <property type="gene designation" value="CGLD27"/>
</dbReference>
<dbReference type="eggNOG" id="ENOG502QS25">
    <property type="taxonomic scope" value="Eukaryota"/>
</dbReference>
<dbReference type="HOGENOM" id="CLU_071172_0_0_1"/>
<dbReference type="InParanoid" id="Q9FN15"/>
<dbReference type="OMA" id="TWIEEGY"/>
<dbReference type="PhylomeDB" id="Q9FN15"/>
<dbReference type="PRO" id="PR:Q9FN15"/>
<dbReference type="Proteomes" id="UP000006548">
    <property type="component" value="Chromosome 5"/>
</dbReference>
<dbReference type="ExpressionAtlas" id="Q9FN15">
    <property type="expression patterns" value="baseline and differential"/>
</dbReference>
<dbReference type="GO" id="GO:0009507">
    <property type="term" value="C:chloroplast"/>
    <property type="evidence" value="ECO:0007669"/>
    <property type="project" value="UniProtKB-SubCell"/>
</dbReference>
<dbReference type="GO" id="GO:0016020">
    <property type="term" value="C:membrane"/>
    <property type="evidence" value="ECO:0007669"/>
    <property type="project" value="UniProtKB-SubCell"/>
</dbReference>
<dbReference type="GO" id="GO:1990641">
    <property type="term" value="P:response to iron ion starvation"/>
    <property type="evidence" value="ECO:0000315"/>
    <property type="project" value="UniProtKB"/>
</dbReference>
<dbReference type="InterPro" id="IPR009631">
    <property type="entry name" value="CGLD27-like"/>
</dbReference>
<dbReference type="PANTHER" id="PTHR34214">
    <property type="match status" value="1"/>
</dbReference>
<dbReference type="PANTHER" id="PTHR34214:SF3">
    <property type="entry name" value="PROTEIN CONSERVED IN THE GREEN LINEAGE AND DIATOMS 27, CHLOROPLASTIC"/>
    <property type="match status" value="1"/>
</dbReference>
<dbReference type="Pfam" id="PF06799">
    <property type="entry name" value="CGLD27-like"/>
    <property type="match status" value="1"/>
</dbReference>
<sequence length="327" mass="36114">MLRLIVNYPLIPKISHRVCSNSSSKLGSYYDSSSIIKYGGISDVVGKKQELFLSVSVKAVEDKGNNGGGSMSFSGQSWDPSSEIEVPSDQRPVNEYSSLKEGMLYSWGELGPSEFFIRLGGLWLVTFTVLGVPVAAASFNPSREPLRFILAAGTGTLFLVSLIVLRIYLGWSYVGDRLLSAVIPYEESGWYDGQMWVKPPEVLARDRLLGSYKVKPVIKMLKQTLIGTGALLVSAFVLFVFATPVEDFFKTTLGSTENQPEVSISRTSNKFNIRKEQLLRLPVDVVTDDDLAAAAAEAADGRPVYCRDRYYRALAGGQYCKWEDLVK</sequence>